<keyword id="KW-0963">Cytoplasm</keyword>
<keyword id="KW-0570">Pentose shunt</keyword>
<keyword id="KW-0704">Schiff base</keyword>
<keyword id="KW-0808">Transferase</keyword>
<evidence type="ECO:0000250" key="1"/>
<evidence type="ECO:0000255" key="2">
    <source>
        <dbReference type="HAMAP-Rule" id="MF_00492"/>
    </source>
</evidence>
<comment type="function">
    <text evidence="2">Transaldolase is important for the balance of metabolites in the pentose-phosphate pathway.</text>
</comment>
<comment type="catalytic activity">
    <reaction evidence="2">
        <text>D-sedoheptulose 7-phosphate + D-glyceraldehyde 3-phosphate = D-erythrose 4-phosphate + beta-D-fructose 6-phosphate</text>
        <dbReference type="Rhea" id="RHEA:17053"/>
        <dbReference type="ChEBI" id="CHEBI:16897"/>
        <dbReference type="ChEBI" id="CHEBI:57483"/>
        <dbReference type="ChEBI" id="CHEBI:57634"/>
        <dbReference type="ChEBI" id="CHEBI:59776"/>
        <dbReference type="EC" id="2.2.1.2"/>
    </reaction>
</comment>
<comment type="pathway">
    <text evidence="2">Carbohydrate degradation; pentose phosphate pathway; D-glyceraldehyde 3-phosphate and beta-D-fructose 6-phosphate from D-ribose 5-phosphate and D-xylulose 5-phosphate (non-oxidative stage): step 2/3.</text>
</comment>
<comment type="subunit">
    <text evidence="1">Homodimer.</text>
</comment>
<comment type="subcellular location">
    <subcellularLocation>
        <location evidence="2">Cytoplasm</location>
    </subcellularLocation>
</comment>
<comment type="similarity">
    <text evidence="2">Belongs to the transaldolase family. Type 1 subfamily.</text>
</comment>
<accession>Q57LN7</accession>
<reference key="1">
    <citation type="journal article" date="2005" name="Nucleic Acids Res.">
        <title>The genome sequence of Salmonella enterica serovar Choleraesuis, a highly invasive and resistant zoonotic pathogen.</title>
        <authorList>
            <person name="Chiu C.-H."/>
            <person name="Tang P."/>
            <person name="Chu C."/>
            <person name="Hu S."/>
            <person name="Bao Q."/>
            <person name="Yu J."/>
            <person name="Chou Y.-Y."/>
            <person name="Wang H.-S."/>
            <person name="Lee Y.-S."/>
        </authorList>
    </citation>
    <scope>NUCLEOTIDE SEQUENCE [LARGE SCALE GENOMIC DNA]</scope>
    <source>
        <strain>SC-B67</strain>
    </source>
</reference>
<gene>
    <name evidence="2" type="primary">tal2</name>
    <name type="ordered locus">SCH_2469</name>
</gene>
<protein>
    <recommendedName>
        <fullName evidence="2">Transaldolase 2</fullName>
        <ecNumber evidence="2">2.2.1.2</ecNumber>
    </recommendedName>
</protein>
<dbReference type="EC" id="2.2.1.2" evidence="2"/>
<dbReference type="EMBL" id="AE017220">
    <property type="protein sequence ID" value="AAX66375.1"/>
    <property type="molecule type" value="Genomic_DNA"/>
</dbReference>
<dbReference type="SMR" id="Q57LN7"/>
<dbReference type="KEGG" id="sec:SCH_2469"/>
<dbReference type="HOGENOM" id="CLU_047470_0_1_6"/>
<dbReference type="UniPathway" id="UPA00115">
    <property type="reaction ID" value="UER00414"/>
</dbReference>
<dbReference type="Proteomes" id="UP000000538">
    <property type="component" value="Chromosome"/>
</dbReference>
<dbReference type="GO" id="GO:0005829">
    <property type="term" value="C:cytosol"/>
    <property type="evidence" value="ECO:0007669"/>
    <property type="project" value="TreeGrafter"/>
</dbReference>
<dbReference type="GO" id="GO:0004801">
    <property type="term" value="F:transaldolase activity"/>
    <property type="evidence" value="ECO:0000250"/>
    <property type="project" value="UniProtKB"/>
</dbReference>
<dbReference type="GO" id="GO:0005975">
    <property type="term" value="P:carbohydrate metabolic process"/>
    <property type="evidence" value="ECO:0007669"/>
    <property type="project" value="InterPro"/>
</dbReference>
<dbReference type="GO" id="GO:0006098">
    <property type="term" value="P:pentose-phosphate shunt"/>
    <property type="evidence" value="ECO:0007669"/>
    <property type="project" value="UniProtKB-UniRule"/>
</dbReference>
<dbReference type="CDD" id="cd00957">
    <property type="entry name" value="Transaldolase_TalAB"/>
    <property type="match status" value="1"/>
</dbReference>
<dbReference type="FunFam" id="3.20.20.70:FF:000002">
    <property type="entry name" value="Transaldolase"/>
    <property type="match status" value="1"/>
</dbReference>
<dbReference type="Gene3D" id="3.20.20.70">
    <property type="entry name" value="Aldolase class I"/>
    <property type="match status" value="1"/>
</dbReference>
<dbReference type="HAMAP" id="MF_00492">
    <property type="entry name" value="Transaldolase_1"/>
    <property type="match status" value="1"/>
</dbReference>
<dbReference type="InterPro" id="IPR013785">
    <property type="entry name" value="Aldolase_TIM"/>
</dbReference>
<dbReference type="InterPro" id="IPR001585">
    <property type="entry name" value="TAL/FSA"/>
</dbReference>
<dbReference type="InterPro" id="IPR004730">
    <property type="entry name" value="Transaldolase_1"/>
</dbReference>
<dbReference type="InterPro" id="IPR018225">
    <property type="entry name" value="Transaldolase_AS"/>
</dbReference>
<dbReference type="NCBIfam" id="NF009001">
    <property type="entry name" value="PRK12346.1"/>
    <property type="match status" value="1"/>
</dbReference>
<dbReference type="NCBIfam" id="TIGR00874">
    <property type="entry name" value="talAB"/>
    <property type="match status" value="1"/>
</dbReference>
<dbReference type="PANTHER" id="PTHR10683">
    <property type="entry name" value="TRANSALDOLASE"/>
    <property type="match status" value="1"/>
</dbReference>
<dbReference type="PANTHER" id="PTHR10683:SF16">
    <property type="entry name" value="TRANSALDOLASE A"/>
    <property type="match status" value="1"/>
</dbReference>
<dbReference type="Pfam" id="PF00923">
    <property type="entry name" value="TAL_FSA"/>
    <property type="match status" value="1"/>
</dbReference>
<dbReference type="SUPFAM" id="SSF51569">
    <property type="entry name" value="Aldolase"/>
    <property type="match status" value="1"/>
</dbReference>
<dbReference type="PROSITE" id="PS01054">
    <property type="entry name" value="TRANSALDOLASE_1"/>
    <property type="match status" value="1"/>
</dbReference>
<dbReference type="PROSITE" id="PS00958">
    <property type="entry name" value="TRANSALDOLASE_2"/>
    <property type="match status" value="1"/>
</dbReference>
<name>TAL2_SALCH</name>
<sequence length="316" mass="35722">MNQLDGIKQFTTVVADSGDIESIRHYQPQDATTNPSLLLKAAGLEQYGHLIEDAIAWGKKHGGTQEQQVAAASDKLAVNFGAEILKSIPGRVSTEVDARLSFDKEKSIEKARHLVDLYQQQDVDKSRILIKLAATWEGIRAAEQLEKEGINCNLTLLFSFAQARACAEAGVYLISPFVGRIYDWYQARSPLEPYVVEEDPGVKSVRNIYDYFKQHRYETIVMGASFRRTEQILALTGCDRLTISPNLLKELKEKEEPVIRKLVPSSQMFHRPTPMTEAEFRWEHNQDAMAVEKLSEGIRLFAVDQRKLEDLLAAKL</sequence>
<organism>
    <name type="scientific">Salmonella choleraesuis (strain SC-B67)</name>
    <dbReference type="NCBI Taxonomy" id="321314"/>
    <lineage>
        <taxon>Bacteria</taxon>
        <taxon>Pseudomonadati</taxon>
        <taxon>Pseudomonadota</taxon>
        <taxon>Gammaproteobacteria</taxon>
        <taxon>Enterobacterales</taxon>
        <taxon>Enterobacteriaceae</taxon>
        <taxon>Salmonella</taxon>
    </lineage>
</organism>
<proteinExistence type="inferred from homology"/>
<feature type="chain" id="PRO_0000230968" description="Transaldolase 2">
    <location>
        <begin position="1"/>
        <end position="316"/>
    </location>
</feature>
<feature type="active site" description="Schiff-base intermediate with substrate" evidence="2">
    <location>
        <position position="131"/>
    </location>
</feature>